<organism>
    <name type="scientific">Phaeosphaeria nodorum (strain SN15 / ATCC MYA-4574 / FGSC 10173)</name>
    <name type="common">Glume blotch fungus</name>
    <name type="synonym">Parastagonospora nodorum</name>
    <dbReference type="NCBI Taxonomy" id="321614"/>
    <lineage>
        <taxon>Eukaryota</taxon>
        <taxon>Fungi</taxon>
        <taxon>Dikarya</taxon>
        <taxon>Ascomycota</taxon>
        <taxon>Pezizomycotina</taxon>
        <taxon>Dothideomycetes</taxon>
        <taxon>Pleosporomycetidae</taxon>
        <taxon>Pleosporales</taxon>
        <taxon>Pleosporineae</taxon>
        <taxon>Phaeosphaeriaceae</taxon>
        <taxon>Parastagonospora</taxon>
    </lineage>
</organism>
<reference key="1">
    <citation type="journal article" date="2007" name="Plant Cell">
        <title>Dothideomycete-plant interactions illuminated by genome sequencing and EST analysis of the wheat pathogen Stagonospora nodorum.</title>
        <authorList>
            <person name="Hane J.K."/>
            <person name="Lowe R.G.T."/>
            <person name="Solomon P.S."/>
            <person name="Tan K.-C."/>
            <person name="Schoch C.L."/>
            <person name="Spatafora J.W."/>
            <person name="Crous P.W."/>
            <person name="Kodira C.D."/>
            <person name="Birren B.W."/>
            <person name="Galagan J.E."/>
            <person name="Torriani S.F.F."/>
            <person name="McDonald B.A."/>
            <person name="Oliver R.P."/>
        </authorList>
    </citation>
    <scope>NUCLEOTIDE SEQUENCE [LARGE SCALE GENOMIC DNA]</scope>
    <source>
        <strain>SN15 / ATCC MYA-4574 / FGSC 10173</strain>
    </source>
</reference>
<gene>
    <name evidence="1" type="primary">BNA4</name>
    <name type="ORF">SNOG_00713</name>
</gene>
<proteinExistence type="inferred from homology"/>
<protein>
    <recommendedName>
        <fullName evidence="1">Kynurenine 3-monooxygenase</fullName>
        <ecNumber evidence="1">1.14.13.9</ecNumber>
    </recommendedName>
    <alternativeName>
        <fullName evidence="1">Biosynthesis of nicotinic acid protein 4</fullName>
    </alternativeName>
    <alternativeName>
        <fullName evidence="1">Kynurenine 3-hydroxylase</fullName>
    </alternativeName>
</protein>
<evidence type="ECO:0000255" key="1">
    <source>
        <dbReference type="HAMAP-Rule" id="MF_03018"/>
    </source>
</evidence>
<comment type="function">
    <text evidence="1">Catalyzes the hydroxylation of L-kynurenine (L-Kyn) to form 3-hydroxy-L-kynurenine (L-3OHKyn). Required for synthesis of quinolinic acid.</text>
</comment>
<comment type="catalytic activity">
    <reaction evidence="1">
        <text>L-kynurenine + NADPH + O2 + H(+) = 3-hydroxy-L-kynurenine + NADP(+) + H2O</text>
        <dbReference type="Rhea" id="RHEA:20545"/>
        <dbReference type="ChEBI" id="CHEBI:15377"/>
        <dbReference type="ChEBI" id="CHEBI:15378"/>
        <dbReference type="ChEBI" id="CHEBI:15379"/>
        <dbReference type="ChEBI" id="CHEBI:57783"/>
        <dbReference type="ChEBI" id="CHEBI:57959"/>
        <dbReference type="ChEBI" id="CHEBI:58125"/>
        <dbReference type="ChEBI" id="CHEBI:58349"/>
        <dbReference type="EC" id="1.14.13.9"/>
    </reaction>
</comment>
<comment type="cofactor">
    <cofactor evidence="1">
        <name>FAD</name>
        <dbReference type="ChEBI" id="CHEBI:57692"/>
    </cofactor>
</comment>
<comment type="pathway">
    <text evidence="1">Cofactor biosynthesis; NAD(+) biosynthesis; quinolinate from L-kynurenine: step 1/3.</text>
</comment>
<comment type="subcellular location">
    <subcellularLocation>
        <location evidence="1">Mitochondrion outer membrane</location>
    </subcellularLocation>
</comment>
<comment type="similarity">
    <text evidence="1">Belongs to the aromatic-ring hydroxylase family. KMO subfamily.</text>
</comment>
<name>KMO_PHANO</name>
<keyword id="KW-0274">FAD</keyword>
<keyword id="KW-0285">Flavoprotein</keyword>
<keyword id="KW-0472">Membrane</keyword>
<keyword id="KW-0496">Mitochondrion</keyword>
<keyword id="KW-1000">Mitochondrion outer membrane</keyword>
<keyword id="KW-0503">Monooxygenase</keyword>
<keyword id="KW-0521">NADP</keyword>
<keyword id="KW-0560">Oxidoreductase</keyword>
<keyword id="KW-0662">Pyridine nucleotide biosynthesis</keyword>
<accession>Q0V5K1</accession>
<sequence length="482" mass="54203">MPQKIVVVGAGPVGSLAALYAAVRGHDVEIYELRSDLRNSEHSSNISQSINLALSERGINSLRKTGLPDLADAVLAETFPMHGRMIHVRKHGQYVRQAQAYDAHGRNLLAMDRTGLNKTLLDHLNSMPNVTFFFHRKLVSVDFRKKLAWFENRTKTDPAKSDDIEVSFDLMIGADGAHSAVRYHLMKFVPMSYQQEYIDKLWCQFHVPPSDKGDFRIPPNYLHIWPQDDAMFIALPNLDKSFTSTLFLTRSGFEELVASGKVVEYFDEKFPGVVPELITEDELRKQFNEHDHFPLISIKCSPYHFGSTGVIVGDSAHAMVPFYGQGMNAGLEDVRVLFEILDKYPGDQAKALSEYSEQRTPDAQTINDLALGNYREMASDVKKPLYLLRKWIEEKLYIYVPSAGWATQYSRVTFSNMRYSEVQAAAQRQAKILNGIVGVTTLSLIGSAALWLGRTGGLQQAKQNILRSICLLAQQAQKVTKG</sequence>
<dbReference type="EC" id="1.14.13.9" evidence="1"/>
<dbReference type="EMBL" id="CH445325">
    <property type="protein sequence ID" value="EAT92208.2"/>
    <property type="molecule type" value="Genomic_DNA"/>
</dbReference>
<dbReference type="RefSeq" id="XP_001791390.1">
    <property type="nucleotide sequence ID" value="XM_001791338.1"/>
</dbReference>
<dbReference type="SMR" id="Q0V5K1"/>
<dbReference type="FunCoup" id="Q0V5K1">
    <property type="interactions" value="709"/>
</dbReference>
<dbReference type="STRING" id="321614.Q0V5K1"/>
<dbReference type="GeneID" id="5968074"/>
<dbReference type="KEGG" id="pno:SNOG_00713"/>
<dbReference type="VEuPathDB" id="FungiDB:JI435_007130"/>
<dbReference type="eggNOG" id="KOG2614">
    <property type="taxonomic scope" value="Eukaryota"/>
</dbReference>
<dbReference type="InParanoid" id="Q0V5K1"/>
<dbReference type="OrthoDB" id="10053569at2759"/>
<dbReference type="UniPathway" id="UPA00253">
    <property type="reaction ID" value="UER00328"/>
</dbReference>
<dbReference type="Proteomes" id="UP000001055">
    <property type="component" value="Unassembled WGS sequence"/>
</dbReference>
<dbReference type="GO" id="GO:0005741">
    <property type="term" value="C:mitochondrial outer membrane"/>
    <property type="evidence" value="ECO:0000318"/>
    <property type="project" value="GO_Central"/>
</dbReference>
<dbReference type="GO" id="GO:0071949">
    <property type="term" value="F:FAD binding"/>
    <property type="evidence" value="ECO:0007669"/>
    <property type="project" value="InterPro"/>
</dbReference>
<dbReference type="GO" id="GO:0004502">
    <property type="term" value="F:kynurenine 3-monooxygenase activity"/>
    <property type="evidence" value="ECO:0000318"/>
    <property type="project" value="GO_Central"/>
</dbReference>
<dbReference type="GO" id="GO:0034354">
    <property type="term" value="P:'de novo' NAD biosynthetic process from L-tryptophan"/>
    <property type="evidence" value="ECO:0007669"/>
    <property type="project" value="UniProtKB-UniRule"/>
</dbReference>
<dbReference type="GO" id="GO:0043420">
    <property type="term" value="P:anthranilate metabolic process"/>
    <property type="evidence" value="ECO:0007669"/>
    <property type="project" value="UniProtKB-UniRule"/>
</dbReference>
<dbReference type="GO" id="GO:0070189">
    <property type="term" value="P:kynurenine metabolic process"/>
    <property type="evidence" value="ECO:0000318"/>
    <property type="project" value="GO_Central"/>
</dbReference>
<dbReference type="GO" id="GO:0006569">
    <property type="term" value="P:L-tryptophan catabolic process"/>
    <property type="evidence" value="ECO:0007669"/>
    <property type="project" value="UniProtKB-UniRule"/>
</dbReference>
<dbReference type="GO" id="GO:0019805">
    <property type="term" value="P:quinolinate biosynthetic process"/>
    <property type="evidence" value="ECO:0007669"/>
    <property type="project" value="UniProtKB-UniRule"/>
</dbReference>
<dbReference type="FunFam" id="3.50.50.60:FF:000129">
    <property type="entry name" value="Kynurenine 3-monooxygenase"/>
    <property type="match status" value="1"/>
</dbReference>
<dbReference type="Gene3D" id="3.50.50.60">
    <property type="entry name" value="FAD/NAD(P)-binding domain"/>
    <property type="match status" value="1"/>
</dbReference>
<dbReference type="HAMAP" id="MF_01971">
    <property type="entry name" value="Kynurenine_monooxygenase"/>
    <property type="match status" value="1"/>
</dbReference>
<dbReference type="InterPro" id="IPR002938">
    <property type="entry name" value="FAD-bd"/>
</dbReference>
<dbReference type="InterPro" id="IPR036188">
    <property type="entry name" value="FAD/NAD-bd_sf"/>
</dbReference>
<dbReference type="InterPro" id="IPR027545">
    <property type="entry name" value="Kynurenine_monooxygenase"/>
</dbReference>
<dbReference type="PANTHER" id="PTHR46028">
    <property type="entry name" value="KYNURENINE 3-MONOOXYGENASE"/>
    <property type="match status" value="1"/>
</dbReference>
<dbReference type="PANTHER" id="PTHR46028:SF2">
    <property type="entry name" value="KYNURENINE 3-MONOOXYGENASE"/>
    <property type="match status" value="1"/>
</dbReference>
<dbReference type="Pfam" id="PF01494">
    <property type="entry name" value="FAD_binding_3"/>
    <property type="match status" value="1"/>
</dbReference>
<dbReference type="PRINTS" id="PR00420">
    <property type="entry name" value="RNGMNOXGNASE"/>
</dbReference>
<dbReference type="SUPFAM" id="SSF51905">
    <property type="entry name" value="FAD/NAD(P)-binding domain"/>
    <property type="match status" value="1"/>
</dbReference>
<feature type="chain" id="PRO_0000361931" description="Kynurenine 3-monooxygenase">
    <location>
        <begin position="1"/>
        <end position="482"/>
    </location>
</feature>